<keyword id="KW-0007">Acetylation</keyword>
<keyword id="KW-0013">ADP-ribosylation</keyword>
<keyword id="KW-0021">Allosteric enzyme</keyword>
<keyword id="KW-0053">Apoptosis</keyword>
<keyword id="KW-0158">Chromosome</keyword>
<keyword id="KW-0963">Cytoplasm</keyword>
<keyword id="KW-0227">DNA damage</keyword>
<keyword id="KW-0234">DNA repair</keyword>
<keyword id="KW-0238">DNA-binding</keyword>
<keyword id="KW-0328">Glycosyltransferase</keyword>
<keyword id="KW-0391">Immunity</keyword>
<keyword id="KW-0399">Innate immunity</keyword>
<keyword id="KW-1017">Isopeptide bond</keyword>
<keyword id="KW-0479">Metal-binding</keyword>
<keyword id="KW-0520">NAD</keyword>
<keyword id="KW-0548">Nucleotidyltransferase</keyword>
<keyword id="KW-0539">Nucleus</keyword>
<keyword id="KW-0597">Phosphoprotein</keyword>
<keyword id="KW-1185">Reference proteome</keyword>
<keyword id="KW-0677">Repeat</keyword>
<keyword id="KW-0804">Transcription</keyword>
<keyword id="KW-0805">Transcription regulation</keyword>
<keyword id="KW-0808">Transferase</keyword>
<keyword id="KW-0832">Ubl conjugation</keyword>
<keyword id="KW-0862">Zinc</keyword>
<keyword id="KW-0863">Zinc-finger</keyword>
<proteinExistence type="evidence at transcript level"/>
<dbReference type="EC" id="2.4.2.30" evidence="1"/>
<dbReference type="EC" id="2.4.2.-" evidence="1"/>
<dbReference type="EMBL" id="D90073">
    <property type="protein sequence ID" value="BAA14114.1"/>
    <property type="molecule type" value="mRNA"/>
</dbReference>
<dbReference type="EMBL" id="X06986">
    <property type="protein sequence ID" value="CAA30046.1"/>
    <property type="molecule type" value="mRNA"/>
</dbReference>
<dbReference type="EMBL" id="X06987">
    <property type="protein sequence ID" value="CAA30047.1"/>
    <property type="molecule type" value="mRNA"/>
</dbReference>
<dbReference type="PIR" id="JS0428">
    <property type="entry name" value="JS0428"/>
</dbReference>
<dbReference type="RefSeq" id="NP_777176.1">
    <property type="nucleotide sequence ID" value="NM_174751.2"/>
</dbReference>
<dbReference type="SMR" id="P18493"/>
<dbReference type="FunCoup" id="P18493">
    <property type="interactions" value="2439"/>
</dbReference>
<dbReference type="STRING" id="9913.ENSBTAP00000059409"/>
<dbReference type="BindingDB" id="P18493"/>
<dbReference type="ChEMBL" id="CHEMBL5691"/>
<dbReference type="PaxDb" id="9913-ENSBTAP00000001113"/>
<dbReference type="PeptideAtlas" id="P18493"/>
<dbReference type="GeneID" id="286764"/>
<dbReference type="KEGG" id="bta:286764"/>
<dbReference type="CTD" id="142"/>
<dbReference type="eggNOG" id="KOG1037">
    <property type="taxonomic scope" value="Eukaryota"/>
</dbReference>
<dbReference type="InParanoid" id="P18493"/>
<dbReference type="OrthoDB" id="429950at2759"/>
<dbReference type="PRO" id="PR:P18493"/>
<dbReference type="Proteomes" id="UP000009136">
    <property type="component" value="Unplaced"/>
</dbReference>
<dbReference type="GO" id="GO:0000785">
    <property type="term" value="C:chromatin"/>
    <property type="evidence" value="ECO:0000250"/>
    <property type="project" value="UniProtKB"/>
</dbReference>
<dbReference type="GO" id="GO:0005829">
    <property type="term" value="C:cytosol"/>
    <property type="evidence" value="ECO:0000250"/>
    <property type="project" value="UniProtKB"/>
</dbReference>
<dbReference type="GO" id="GO:0005635">
    <property type="term" value="C:nuclear envelope"/>
    <property type="evidence" value="ECO:0000250"/>
    <property type="project" value="AgBase"/>
</dbReference>
<dbReference type="GO" id="GO:0043596">
    <property type="term" value="C:nuclear replication fork"/>
    <property type="evidence" value="ECO:0000250"/>
    <property type="project" value="UniProtKB"/>
</dbReference>
<dbReference type="GO" id="GO:0005730">
    <property type="term" value="C:nucleolus"/>
    <property type="evidence" value="ECO:0000250"/>
    <property type="project" value="AgBase"/>
</dbReference>
<dbReference type="GO" id="GO:0005634">
    <property type="term" value="C:nucleus"/>
    <property type="evidence" value="ECO:0000250"/>
    <property type="project" value="UniProtKB"/>
</dbReference>
<dbReference type="GO" id="GO:0090734">
    <property type="term" value="C:site of DNA damage"/>
    <property type="evidence" value="ECO:0000250"/>
    <property type="project" value="UniProtKB"/>
</dbReference>
<dbReference type="GO" id="GO:0035861">
    <property type="term" value="C:site of double-strand break"/>
    <property type="evidence" value="ECO:0000250"/>
    <property type="project" value="UniProtKB"/>
</dbReference>
<dbReference type="GO" id="GO:0003684">
    <property type="term" value="F:damaged DNA binding"/>
    <property type="evidence" value="ECO:0000250"/>
    <property type="project" value="UniProtKB"/>
</dbReference>
<dbReference type="GO" id="GO:0051287">
    <property type="term" value="F:NAD binding"/>
    <property type="evidence" value="ECO:0007669"/>
    <property type="project" value="InterPro"/>
</dbReference>
<dbReference type="GO" id="GO:0003950">
    <property type="term" value="F:NAD+ poly-ADP-ribosyltransferase activity"/>
    <property type="evidence" value="ECO:0000250"/>
    <property type="project" value="UniProtKB"/>
</dbReference>
<dbReference type="GO" id="GO:1990404">
    <property type="term" value="F:NAD+-protein mono-ADP-ribosyltransferase activity"/>
    <property type="evidence" value="ECO:0000250"/>
    <property type="project" value="UniProtKB"/>
</dbReference>
<dbReference type="GO" id="GO:0140806">
    <property type="term" value="F:NAD+-protein-aspartate ADP-ribosyltransferase activity"/>
    <property type="evidence" value="ECO:0000250"/>
    <property type="project" value="UniProtKB"/>
</dbReference>
<dbReference type="GO" id="GO:0140807">
    <property type="term" value="F:NAD+-protein-glutamate ADP-ribosyltransferase activity"/>
    <property type="evidence" value="ECO:0000250"/>
    <property type="project" value="UniProtKB"/>
</dbReference>
<dbReference type="GO" id="GO:0140815">
    <property type="term" value="F:NAD+-protein-histidine ADP-ribosyltransferase activity"/>
    <property type="evidence" value="ECO:0000250"/>
    <property type="project" value="UniProtKB"/>
</dbReference>
<dbReference type="GO" id="GO:0140805">
    <property type="term" value="F:NAD+-protein-serine ADP-ribosyltransferase activity"/>
    <property type="evidence" value="ECO:0000250"/>
    <property type="project" value="UniProtKB"/>
</dbReference>
<dbReference type="GO" id="GO:0140808">
    <property type="term" value="F:NAD+-protein-tyrosine ADP-ribosyltransferase activity"/>
    <property type="evidence" value="ECO:0000250"/>
    <property type="project" value="UniProtKB"/>
</dbReference>
<dbReference type="GO" id="GO:0031491">
    <property type="term" value="F:nucleosome binding"/>
    <property type="evidence" value="ECO:0000250"/>
    <property type="project" value="UniProtKB"/>
</dbReference>
<dbReference type="GO" id="GO:0016779">
    <property type="term" value="F:nucleotidyltransferase activity"/>
    <property type="evidence" value="ECO:0007669"/>
    <property type="project" value="UniProtKB-KW"/>
</dbReference>
<dbReference type="GO" id="GO:0042803">
    <property type="term" value="F:protein homodimerization activity"/>
    <property type="evidence" value="ECO:0000250"/>
    <property type="project" value="UniProtKB"/>
</dbReference>
<dbReference type="GO" id="GO:0008270">
    <property type="term" value="F:zinc ion binding"/>
    <property type="evidence" value="ECO:0000250"/>
    <property type="project" value="UniProtKB"/>
</dbReference>
<dbReference type="GO" id="GO:0006915">
    <property type="term" value="P:apoptotic process"/>
    <property type="evidence" value="ECO:0007669"/>
    <property type="project" value="UniProtKB-KW"/>
</dbReference>
<dbReference type="GO" id="GO:1990966">
    <property type="term" value="P:ATP generation from poly-ADP-D-ribose"/>
    <property type="evidence" value="ECO:0000250"/>
    <property type="project" value="UniProtKB"/>
</dbReference>
<dbReference type="GO" id="GO:0046697">
    <property type="term" value="P:decidualization"/>
    <property type="evidence" value="ECO:0000250"/>
    <property type="project" value="UniProtKB"/>
</dbReference>
<dbReference type="GO" id="GO:0030592">
    <property type="term" value="P:DNA ADP-ribosylation"/>
    <property type="evidence" value="ECO:0000250"/>
    <property type="project" value="UniProtKB"/>
</dbReference>
<dbReference type="GO" id="GO:0006974">
    <property type="term" value="P:DNA damage response"/>
    <property type="evidence" value="ECO:0000250"/>
    <property type="project" value="UniProtKB"/>
</dbReference>
<dbReference type="GO" id="GO:0006302">
    <property type="term" value="P:double-strand break repair"/>
    <property type="evidence" value="ECO:0000250"/>
    <property type="project" value="UniProtKB"/>
</dbReference>
<dbReference type="GO" id="GO:0045087">
    <property type="term" value="P:innate immune response"/>
    <property type="evidence" value="ECO:0007669"/>
    <property type="project" value="UniProtKB-KW"/>
</dbReference>
<dbReference type="GO" id="GO:0045824">
    <property type="term" value="P:negative regulation of innate immune response"/>
    <property type="evidence" value="ECO:0000250"/>
    <property type="project" value="UniProtKB"/>
</dbReference>
<dbReference type="GO" id="GO:0000122">
    <property type="term" value="P:negative regulation of transcription by RNA polymerase II"/>
    <property type="evidence" value="ECO:0000250"/>
    <property type="project" value="UniProtKB"/>
</dbReference>
<dbReference type="GO" id="GO:0010613">
    <property type="term" value="P:positive regulation of cardiac muscle hypertrophy"/>
    <property type="evidence" value="ECO:0000250"/>
    <property type="project" value="UniProtKB"/>
</dbReference>
<dbReference type="GO" id="GO:1905168">
    <property type="term" value="P:positive regulation of double-strand break repair via homologous recombination"/>
    <property type="evidence" value="ECO:0000250"/>
    <property type="project" value="UniProtKB"/>
</dbReference>
<dbReference type="GO" id="GO:0060545">
    <property type="term" value="P:positive regulation of necroptotic process"/>
    <property type="evidence" value="ECO:0000250"/>
    <property type="project" value="UniProtKB"/>
</dbReference>
<dbReference type="GO" id="GO:1903518">
    <property type="term" value="P:positive regulation of single strand break repair"/>
    <property type="evidence" value="ECO:0000318"/>
    <property type="project" value="GO_Central"/>
</dbReference>
<dbReference type="GO" id="GO:0070213">
    <property type="term" value="P:protein auto-ADP-ribosylation"/>
    <property type="evidence" value="ECO:0000250"/>
    <property type="project" value="UniProtKB"/>
</dbReference>
<dbReference type="GO" id="GO:0070212">
    <property type="term" value="P:protein poly-ADP-ribosylation"/>
    <property type="evidence" value="ECO:0000250"/>
    <property type="project" value="UniProtKB"/>
</dbReference>
<dbReference type="GO" id="GO:0045188">
    <property type="term" value="P:regulation of circadian sleep/wake cycle, non-REM sleep"/>
    <property type="evidence" value="ECO:0000250"/>
    <property type="project" value="UniProtKB"/>
</dbReference>
<dbReference type="GO" id="GO:0071932">
    <property type="term" value="P:replication fork reversal"/>
    <property type="evidence" value="ECO:0000250"/>
    <property type="project" value="UniProtKB"/>
</dbReference>
<dbReference type="CDD" id="cd17747">
    <property type="entry name" value="BRCT_PARP1"/>
    <property type="match status" value="1"/>
</dbReference>
<dbReference type="CDD" id="cd01437">
    <property type="entry name" value="parp_like"/>
    <property type="match status" value="1"/>
</dbReference>
<dbReference type="CDD" id="cd08001">
    <property type="entry name" value="WGR_PARP1_like"/>
    <property type="match status" value="1"/>
</dbReference>
<dbReference type="FunFam" id="1.10.20.130:FF:000001">
    <property type="entry name" value="Poly [ADP-ribose] polymerase"/>
    <property type="match status" value="1"/>
</dbReference>
<dbReference type="FunFam" id="1.20.142.10:FF:000001">
    <property type="entry name" value="Poly [ADP-ribose] polymerase"/>
    <property type="match status" value="1"/>
</dbReference>
<dbReference type="FunFam" id="2.20.25.630:FF:000001">
    <property type="entry name" value="Poly [ADP-ribose] polymerase"/>
    <property type="match status" value="1"/>
</dbReference>
<dbReference type="FunFam" id="3.30.1740.10:FF:000002">
    <property type="entry name" value="Poly [ADP-ribose] polymerase"/>
    <property type="match status" value="1"/>
</dbReference>
<dbReference type="FunFam" id="3.30.1740.10:FF:000003">
    <property type="entry name" value="Poly [ADP-ribose] polymerase"/>
    <property type="match status" value="1"/>
</dbReference>
<dbReference type="FunFam" id="3.40.50.10190:FF:000030">
    <property type="entry name" value="Poly [ADP-ribose] polymerase"/>
    <property type="match status" value="1"/>
</dbReference>
<dbReference type="FunFam" id="3.90.228.10:FF:000002">
    <property type="entry name" value="Poly [ADP-ribose] polymerase"/>
    <property type="match status" value="1"/>
</dbReference>
<dbReference type="Gene3D" id="1.10.20.130">
    <property type="match status" value="1"/>
</dbReference>
<dbReference type="Gene3D" id="2.20.25.630">
    <property type="match status" value="1"/>
</dbReference>
<dbReference type="Gene3D" id="3.90.228.10">
    <property type="match status" value="1"/>
</dbReference>
<dbReference type="Gene3D" id="3.40.50.10190">
    <property type="entry name" value="BRCT domain"/>
    <property type="match status" value="1"/>
</dbReference>
<dbReference type="Gene3D" id="1.20.142.10">
    <property type="entry name" value="Poly(ADP-ribose) polymerase, regulatory domain"/>
    <property type="match status" value="1"/>
</dbReference>
<dbReference type="Gene3D" id="3.30.1740.10">
    <property type="entry name" value="Zinc finger, PARP-type"/>
    <property type="match status" value="2"/>
</dbReference>
<dbReference type="InterPro" id="IPR050800">
    <property type="entry name" value="ARTD/PARP"/>
</dbReference>
<dbReference type="InterPro" id="IPR001357">
    <property type="entry name" value="BRCT_dom"/>
</dbReference>
<dbReference type="InterPro" id="IPR036420">
    <property type="entry name" value="BRCT_dom_sf"/>
</dbReference>
<dbReference type="InterPro" id="IPR038650">
    <property type="entry name" value="PADR1_C_dom_sf"/>
</dbReference>
<dbReference type="InterPro" id="IPR008288">
    <property type="entry name" value="PARP"/>
</dbReference>
<dbReference type="InterPro" id="IPR049296">
    <property type="entry name" value="PARP1-like_PADR1_N"/>
</dbReference>
<dbReference type="InterPro" id="IPR012982">
    <property type="entry name" value="PARP1-like_PADR1_Zn_ribbon"/>
</dbReference>
<dbReference type="InterPro" id="IPR012317">
    <property type="entry name" value="Poly(ADP-ribose)pol_cat_dom"/>
</dbReference>
<dbReference type="InterPro" id="IPR004102">
    <property type="entry name" value="Poly(ADP-ribose)pol_reg_dom"/>
</dbReference>
<dbReference type="InterPro" id="IPR036616">
    <property type="entry name" value="Poly(ADP-ribose)pol_reg_dom_sf"/>
</dbReference>
<dbReference type="InterPro" id="IPR036930">
    <property type="entry name" value="WGR_dom_sf"/>
</dbReference>
<dbReference type="InterPro" id="IPR008893">
    <property type="entry name" value="WGR_domain"/>
</dbReference>
<dbReference type="InterPro" id="IPR001510">
    <property type="entry name" value="Znf_PARP"/>
</dbReference>
<dbReference type="InterPro" id="IPR036957">
    <property type="entry name" value="Znf_PARP_sf"/>
</dbReference>
<dbReference type="PANTHER" id="PTHR10459">
    <property type="entry name" value="DNA LIGASE"/>
    <property type="match status" value="1"/>
</dbReference>
<dbReference type="PANTHER" id="PTHR10459:SF112">
    <property type="entry name" value="POLY [ADP-RIBOSE] POLYMERASE 1"/>
    <property type="match status" value="1"/>
</dbReference>
<dbReference type="Pfam" id="PF00533">
    <property type="entry name" value="BRCT"/>
    <property type="match status" value="1"/>
</dbReference>
<dbReference type="Pfam" id="PF21728">
    <property type="entry name" value="PADR1_N"/>
    <property type="match status" value="1"/>
</dbReference>
<dbReference type="Pfam" id="PF00644">
    <property type="entry name" value="PARP"/>
    <property type="match status" value="1"/>
</dbReference>
<dbReference type="Pfam" id="PF02877">
    <property type="entry name" value="PARP_reg"/>
    <property type="match status" value="1"/>
</dbReference>
<dbReference type="Pfam" id="PF05406">
    <property type="entry name" value="WGR"/>
    <property type="match status" value="1"/>
</dbReference>
<dbReference type="Pfam" id="PF00645">
    <property type="entry name" value="zf-PARP"/>
    <property type="match status" value="2"/>
</dbReference>
<dbReference type="Pfam" id="PF08063">
    <property type="entry name" value="Zn_ribbon_PADR1"/>
    <property type="match status" value="1"/>
</dbReference>
<dbReference type="PIRSF" id="PIRSF000489">
    <property type="entry name" value="NAD_ADPRT"/>
    <property type="match status" value="1"/>
</dbReference>
<dbReference type="SMART" id="SM00292">
    <property type="entry name" value="BRCT"/>
    <property type="match status" value="1"/>
</dbReference>
<dbReference type="SMART" id="SM01335">
    <property type="entry name" value="PADR1"/>
    <property type="match status" value="1"/>
</dbReference>
<dbReference type="SMART" id="SM00773">
    <property type="entry name" value="WGR"/>
    <property type="match status" value="1"/>
</dbReference>
<dbReference type="SMART" id="SM01336">
    <property type="entry name" value="zf-PARP"/>
    <property type="match status" value="2"/>
</dbReference>
<dbReference type="SUPFAM" id="SSF56399">
    <property type="entry name" value="ADP-ribosylation"/>
    <property type="match status" value="1"/>
</dbReference>
<dbReference type="SUPFAM" id="SSF52113">
    <property type="entry name" value="BRCT domain"/>
    <property type="match status" value="1"/>
</dbReference>
<dbReference type="SUPFAM" id="SSF47587">
    <property type="entry name" value="Domain of poly(ADP-ribose) polymerase"/>
    <property type="match status" value="1"/>
</dbReference>
<dbReference type="SUPFAM" id="SSF57716">
    <property type="entry name" value="Glucocorticoid receptor-like (DNA-binding domain)"/>
    <property type="match status" value="2"/>
</dbReference>
<dbReference type="SUPFAM" id="SSF142921">
    <property type="entry name" value="WGR domain-like"/>
    <property type="match status" value="1"/>
</dbReference>
<dbReference type="PROSITE" id="PS50172">
    <property type="entry name" value="BRCT"/>
    <property type="match status" value="1"/>
</dbReference>
<dbReference type="PROSITE" id="PS52007">
    <property type="entry name" value="PADR1"/>
    <property type="match status" value="1"/>
</dbReference>
<dbReference type="PROSITE" id="PS51060">
    <property type="entry name" value="PARP_ALPHA_HD"/>
    <property type="match status" value="1"/>
</dbReference>
<dbReference type="PROSITE" id="PS51059">
    <property type="entry name" value="PARP_CATALYTIC"/>
    <property type="match status" value="1"/>
</dbReference>
<dbReference type="PROSITE" id="PS51977">
    <property type="entry name" value="WGR"/>
    <property type="match status" value="1"/>
</dbReference>
<dbReference type="PROSITE" id="PS00347">
    <property type="entry name" value="ZF_PARP_1"/>
    <property type="match status" value="2"/>
</dbReference>
<dbReference type="PROSITE" id="PS50064">
    <property type="entry name" value="ZF_PARP_2"/>
    <property type="match status" value="2"/>
</dbReference>
<sequence>MAESSDKLYRVEYAKSGRASCKKCKESIPKDSIRMAFMVESPMFDGKIPHWYHLSCFWKVGFSIWHPDVEVEGFSELRWDDQQTIKKMAETGGRTDVSGKGQDGVGSKTEKTLIDFGAGYAKSNRSTCKSCMEKIDKGQVRLSKKVVYPDKPQLGMVDCWYHPKCFVQKREELGFRPEFSATHLMGFSVLTAEDQETLKKQLPAIKGERKRKGDEVDGIDEVTKKKSKKEKDKEIKLEKALKAQNDLIWNVKDELKKACSTNDLKELLIFNKQEVPSGESAILDRVADGMVFGALLPCEECSGQLVFKGDAYYCTGDVTAWTKCMVKTQTPNRKEWVTPKEFREISYFKKLKIKKQDRIFPPESSTPVGAAAPPSAASAPAAVHSGPPDKPLSNMKILTLGKLSQNKDEVKATIEKLGGKLTGTANKASLCISTKKEVDKLNKKMEEVKEANIRVVSEDFLQDISASTKSLQELLSTHLLSPWGAEVKVEPVEAVGPKGKSGAAPSKKSKGPVKEEGTNKSEKRMKLTLKGGAAVDPDSGLEHNAHVLEKGGKVFSATLGLVDIVKGTNSYYKLQLLEDDKESRYWIFRSWGRVGTVIGSNKLEQMPSKEDAIEHFMKLYEEKTGNAWHSKNFTKHPKKFYPLEIDYGQDEEAVKKLTVNPGTKSKLPKPVQNLIKMIFDVESMKKAMVEYEIDLQKMPLGKLSKRQIQAAYSILSEVQQALSQGSSDSHILDLSNRFYTLIPHDFGMKKPPLLNNANSVQAKVEMLDNLLDIEVAYSLLRGGSDDSSKDPIDVNYEKLKTDIKVVDKDSEEAEIIRKYVKNTHATTHNAYDLEVVDIFKIEREGESQRYKPFKQLHNRRLLWHGSRTTNFAGILSQGLRIAPPEAPVTGYMFGKGIYFADMVSKSANYCHTSQGDPIGLILLGEAALGNMYELKHARHISKLPKGKHSVKGLGKTTPDPSASITVDGVEVPLGTGISSGVNDTCLLYNEYIVYDIAQVHLKYLLKLKFNFKTSLW</sequence>
<reference key="1">
    <citation type="journal article" date="1990" name="Gene">
        <title>Cloning of a full-length cDNA encoding bovine thymus poly(ADP-ribose) synthetase: evolutionarily conserved segments and their potential functions.</title>
        <authorList>
            <person name="Saito I."/>
            <person name="Hatakeyama K."/>
            <person name="Kido T."/>
            <person name="Ohkubo H."/>
            <person name="Nakanishi S."/>
            <person name="Ueda K."/>
        </authorList>
    </citation>
    <scope>NUCLEOTIDE SEQUENCE [MRNA]</scope>
</reference>
<reference key="2">
    <citation type="journal article" date="1988" name="Eur. J. Biochem.">
        <title>Depression in gene expression for poly(ADP-ribose) synthetase during the interferon-gamma-induced activation process of murine macrophage tumor cells.</title>
        <authorList>
            <person name="Taniguchi T."/>
            <person name="Yamauchi K."/>
            <person name="Yamamoto T."/>
            <person name="Toyoshima K."/>
            <person name="Harada N."/>
            <person name="Tanaka H."/>
            <person name="Takahashi S."/>
            <person name="Yamamoto H."/>
            <person name="Fujimoto S."/>
        </authorList>
    </citation>
    <scope>NUCLEOTIDE SEQUENCE [MRNA] OF 648-715 AND 839-904</scope>
</reference>
<gene>
    <name type="primary">PARP1</name>
    <name type="synonym">ADPRT</name>
</gene>
<evidence type="ECO:0000250" key="1">
    <source>
        <dbReference type="UniProtKB" id="P09874"/>
    </source>
</evidence>
<evidence type="ECO:0000250" key="2">
    <source>
        <dbReference type="UniProtKB" id="P11103"/>
    </source>
</evidence>
<evidence type="ECO:0000250" key="3">
    <source>
        <dbReference type="UniProtKB" id="P27008"/>
    </source>
</evidence>
<evidence type="ECO:0000250" key="4">
    <source>
        <dbReference type="UniProtKB" id="Q9UGN5"/>
    </source>
</evidence>
<evidence type="ECO:0000255" key="5"/>
<evidence type="ECO:0000255" key="6">
    <source>
        <dbReference type="PROSITE-ProRule" id="PRU00033"/>
    </source>
</evidence>
<evidence type="ECO:0000255" key="7">
    <source>
        <dbReference type="PROSITE-ProRule" id="PRU00264"/>
    </source>
</evidence>
<evidence type="ECO:0000255" key="8">
    <source>
        <dbReference type="PROSITE-ProRule" id="PRU00397"/>
    </source>
</evidence>
<evidence type="ECO:0000255" key="9">
    <source>
        <dbReference type="PROSITE-ProRule" id="PRU00398"/>
    </source>
</evidence>
<evidence type="ECO:0000255" key="10">
    <source>
        <dbReference type="PROSITE-ProRule" id="PRU01321"/>
    </source>
</evidence>
<evidence type="ECO:0000255" key="11">
    <source>
        <dbReference type="PROSITE-ProRule" id="PRU01351"/>
    </source>
</evidence>
<evidence type="ECO:0000256" key="12">
    <source>
        <dbReference type="SAM" id="MobiDB-lite"/>
    </source>
</evidence>
<evidence type="ECO:0000305" key="13"/>
<accession>P18493</accession>
<accession>Q9TS00</accession>
<protein>
    <recommendedName>
        <fullName>Poly [ADP-ribose] polymerase 1</fullName>
        <shortName>PARP-1</shortName>
        <ecNumber evidence="1">2.4.2.30</ecNumber>
    </recommendedName>
    <alternativeName>
        <fullName>ADP-ribosyltransferase diphtheria toxin-like 1</fullName>
        <shortName>ARTD1</shortName>
    </alternativeName>
    <alternativeName>
        <fullName evidence="1">DNA ADP-ribosyltransferase PARP1</fullName>
        <ecNumber evidence="1">2.4.2.-</ecNumber>
    </alternativeName>
    <alternativeName>
        <fullName>NAD(+) ADP-ribosyltransferase 1</fullName>
        <shortName>ADPRT 1</shortName>
    </alternativeName>
    <alternativeName>
        <fullName>Poly[ADP-ribose] synthase 1</fullName>
    </alternativeName>
    <alternativeName>
        <fullName evidence="1">Protein poly-ADP-ribosyltransferase PARP1</fullName>
        <ecNumber evidence="1">2.4.2.-</ecNumber>
    </alternativeName>
    <component>
        <recommendedName>
            <fullName evidence="1">Poly [ADP-ribose] polymerase 1, processed C-terminus</fullName>
        </recommendedName>
        <alternativeName>
            <fullName evidence="1">Poly [ADP-ribose] polymerase 1, 89-kDa form</fullName>
        </alternativeName>
    </component>
    <component>
        <recommendedName>
            <fullName evidence="1">Poly [ADP-ribose] polymerase 1, processed N-terminus</fullName>
        </recommendedName>
        <alternativeName>
            <fullName evidence="1">Poly [ADP-ribose] polymerase 1, 24-kDa form</fullName>
        </alternativeName>
    </component>
</protein>
<organism>
    <name type="scientific">Bos taurus</name>
    <name type="common">Bovine</name>
    <dbReference type="NCBI Taxonomy" id="9913"/>
    <lineage>
        <taxon>Eukaryota</taxon>
        <taxon>Metazoa</taxon>
        <taxon>Chordata</taxon>
        <taxon>Craniata</taxon>
        <taxon>Vertebrata</taxon>
        <taxon>Euteleostomi</taxon>
        <taxon>Mammalia</taxon>
        <taxon>Eutheria</taxon>
        <taxon>Laurasiatheria</taxon>
        <taxon>Artiodactyla</taxon>
        <taxon>Ruminantia</taxon>
        <taxon>Pecora</taxon>
        <taxon>Bovidae</taxon>
        <taxon>Bovinae</taxon>
        <taxon>Bos</taxon>
    </lineage>
</organism>
<comment type="function">
    <text evidence="1 2">Poly-ADP-ribosyltransferase that mediates poly-ADP-ribosylation of proteins and plays a key role in DNA repair (By similarity). Mediates glutamate, aspartate, serine, histidine or tyrosine ADP-ribosylation of proteins: the ADP-D-ribosyl group of NAD(+) is transferred to the acceptor carboxyl group of target residues and further ADP-ribosyl groups are transferred to the 2'-position of the terminal adenosine moiety, building up a polymer with an average chain length of 20-30 units. Serine ADP-ribosylation of proteins constitutes the primary form of ADP-ribosylation of proteins in response to DNA damage (By similarity). Specificity for the different amino acids is conferred by interacting factors, such as HPF1 and NMNAT1 (By similarity). Following interaction with HPF1, catalyzes serine ADP-ribosylation of target proteins; HPF1 confers serine specificity by completing the PARP1 active site. Also catalyzes tyrosine ADP-ribosylation of target proteins following interaction with HPF1 (By similarity). Following interaction with NMNAT1, catalyzes glutamate and aspartate ADP-ribosylation of target proteins; NMNAT1 confers glutamate and aspartate specificity (By similarity). PARP1 initiates the repair of DNA breaks: recognizes and binds DNA breaks within chromatin and recruits HPF1, licensing serine ADP-ribosylation of target proteins, such as histones (H2BS6ADPr and H3S10ADPr), thereby promoting decompaction of chromatin and the recruitment of repair factors leading to the reparation of DNA strand breaks. HPF1 initiates serine ADP-ribosylation but restricts the polymerase activity of PARP1 in order to limit the length of poly-ADP-ribose chains. In addition to base excision repair (BER) pathway, also involved in double-strand breaks (DSBs) repair: together with TIMELESS, accumulates at DNA damage sites and promotes homologous recombination repair by mediating poly-ADP-ribosylation. Mediates the poly-ADP-ribosylation of a number of proteins, including itself, APLF, CHFR and NFAT5. In addition to proteins, also able to ADP-ribosylate DNA: catalyzes ADP-ribosylation of DNA strand break termini containing terminal phosphates and a 2'-OH group in single- and double-stranded DNA, respectively. Required for PARP9 and DTX3L recruitment to DNA damage sites. PARP1-dependent PARP9-DTX3L-mediated ubiquitination promotes the rapid and specific recruitment of 53BP1/TP53BP1, UIMC1/RAP80, and BRCA1 to DNA damage sites (By similarity). PARP1-mediated DNA repair in neurons plays a role in sleep: senses DNA damage in neurons and promotes sleep, facilitating efficient DNA repair. In addition to DNA repair, also involved in other processes, such as transcription regulation, programmed cell death, membrane repair, adipogenesis and innate immunity (By similarity). Acts as a repressor of transcription: binds to nucleosomes and modulates chromatin structure in a manner similar to histone H1, thereby altering RNA polymerase II. Acts both as a positive and negative regulator of transcription elongation, depending on the context. Acts as a positive regulator of transcription elongation by mediating poly-ADP-ribosylation of NELFE, preventing RNA-binding activity of NELFE and relieving transcription pausing. Acts as a negative regulator of transcription elongation in response to DNA damage by catalyzing poly-ADP-ribosylation of CCNT1, disrupting the phase separation activity of CCNT1 and subsequent activation of CDK9. Involved in replication fork progression following interaction with CARM1: mediates poly-ADP-ribosylation at replication forks, slowing fork progression (By similarity). Poly-ADP-ribose chains generated by PARP1 also play a role in poly-ADP-ribose-dependent cell death, a process named parthanatos. Also acts as a negative regulator of the cGAS-STING pathway. Acts by mediating poly-ADP-ribosylation of CGAS: PARP1 translocates into the cytosol following phosphorylation by PRKDC and catalyzes poly-ADP-ribosylation and inactivation of CGAS. Acts as a negative regulator of adipogenesis: catalyzes poly-ADP-ribosylation of histone H2B on 'Glu-35' (H2BE35ADPr) following interaction with NMNAT1, inhibiting phosphorylation of H2B at 'Ser-36' (H2BS36ph), thereby blocking expression of pro-adipogenetic genes (By similarity). Involved in the synthesis of ATP in the nucleus, together with NMNAT1, PARG and NUDT5. Nuclear ATP generation is required for extensive chromatin remodeling events that are energy-consuming (By similarity).</text>
</comment>
<comment type="function">
    <molecule>Poly [ADP-ribose] polymerase 1, processed C-terminus</molecule>
    <text evidence="1">Promotes AIFM1-mediated apoptosis. This form, which translocates into the cytoplasm following cleavage by caspase-3 (CASP3) and caspase-7 (CASP7) in response to apoptosis, is auto-poly-ADP-ribosylated and serves as a poly-ADP-ribose carrier to induce AIFM1-mediated apoptosis.</text>
</comment>
<comment type="function">
    <molecule>Poly [ADP-ribose] polymerase 1, processed N-terminus</molecule>
    <text evidence="1">This cleavage form irreversibly binds to DNA breaks and interferes with DNA repair, promoting DNA damage-induced apoptosis.</text>
</comment>
<comment type="catalytic activity">
    <reaction evidence="1">
        <text>NAD(+) + (ADP-D-ribosyl)n-acceptor = nicotinamide + (ADP-D-ribosyl)n+1-acceptor + H(+).</text>
        <dbReference type="EC" id="2.4.2.30"/>
    </reaction>
</comment>
<comment type="catalytic activity">
    <reaction evidence="1">
        <text>L-seryl-[protein] + NAD(+) = O-(ADP-D-ribosyl)-L-seryl-[protein] + nicotinamide + H(+)</text>
        <dbReference type="Rhea" id="RHEA:58232"/>
        <dbReference type="Rhea" id="RHEA-COMP:9863"/>
        <dbReference type="Rhea" id="RHEA-COMP:15091"/>
        <dbReference type="ChEBI" id="CHEBI:15378"/>
        <dbReference type="ChEBI" id="CHEBI:17154"/>
        <dbReference type="ChEBI" id="CHEBI:29999"/>
        <dbReference type="ChEBI" id="CHEBI:57540"/>
        <dbReference type="ChEBI" id="CHEBI:142556"/>
    </reaction>
    <physiologicalReaction direction="left-to-right" evidence="1">
        <dbReference type="Rhea" id="RHEA:58233"/>
    </physiologicalReaction>
</comment>
<comment type="catalytic activity">
    <reaction evidence="2">
        <text>L-aspartyl-[protein] + NAD(+) = 4-O-(ADP-D-ribosyl)-L-aspartyl-[protein] + nicotinamide</text>
        <dbReference type="Rhea" id="RHEA:54424"/>
        <dbReference type="Rhea" id="RHEA-COMP:9867"/>
        <dbReference type="Rhea" id="RHEA-COMP:13832"/>
        <dbReference type="ChEBI" id="CHEBI:17154"/>
        <dbReference type="ChEBI" id="CHEBI:29961"/>
        <dbReference type="ChEBI" id="CHEBI:57540"/>
        <dbReference type="ChEBI" id="CHEBI:138102"/>
    </reaction>
    <physiologicalReaction direction="left-to-right" evidence="2">
        <dbReference type="Rhea" id="RHEA:54425"/>
    </physiologicalReaction>
</comment>
<comment type="catalytic activity">
    <reaction evidence="2">
        <text>L-glutamyl-[protein] + NAD(+) = 5-O-(ADP-D-ribosyl)-L-glutamyl-[protein] + nicotinamide</text>
        <dbReference type="Rhea" id="RHEA:58224"/>
        <dbReference type="Rhea" id="RHEA-COMP:10208"/>
        <dbReference type="Rhea" id="RHEA-COMP:15089"/>
        <dbReference type="ChEBI" id="CHEBI:17154"/>
        <dbReference type="ChEBI" id="CHEBI:29973"/>
        <dbReference type="ChEBI" id="CHEBI:57540"/>
        <dbReference type="ChEBI" id="CHEBI:142540"/>
    </reaction>
    <physiologicalReaction direction="left-to-right" evidence="2">
        <dbReference type="Rhea" id="RHEA:58225"/>
    </physiologicalReaction>
</comment>
<comment type="catalytic activity">
    <reaction evidence="1">
        <text>L-tyrosyl-[protein] + NAD(+) = O-(ADP-D-ribosyl)-L-tyrosyl-[protein] + nicotinamide + H(+)</text>
        <dbReference type="Rhea" id="RHEA:58236"/>
        <dbReference type="Rhea" id="RHEA-COMP:10136"/>
        <dbReference type="Rhea" id="RHEA-COMP:15092"/>
        <dbReference type="ChEBI" id="CHEBI:15378"/>
        <dbReference type="ChEBI" id="CHEBI:17154"/>
        <dbReference type="ChEBI" id="CHEBI:46858"/>
        <dbReference type="ChEBI" id="CHEBI:57540"/>
        <dbReference type="ChEBI" id="CHEBI:142557"/>
    </reaction>
    <physiologicalReaction direction="left-to-right" evidence="1">
        <dbReference type="Rhea" id="RHEA:58237"/>
    </physiologicalReaction>
</comment>
<comment type="catalytic activity">
    <reaction evidence="1">
        <text>L-histidyl-[protein] + NAD(+) = N(tele)-(ADP-D-ribosyl)-L-histidyl-[protein] + nicotinamide + H(+)</text>
        <dbReference type="Rhea" id="RHEA:72071"/>
        <dbReference type="Rhea" id="RHEA-COMP:9745"/>
        <dbReference type="Rhea" id="RHEA-COMP:18085"/>
        <dbReference type="ChEBI" id="CHEBI:15378"/>
        <dbReference type="ChEBI" id="CHEBI:17154"/>
        <dbReference type="ChEBI" id="CHEBI:29979"/>
        <dbReference type="ChEBI" id="CHEBI:57540"/>
        <dbReference type="ChEBI" id="CHEBI:191398"/>
    </reaction>
    <physiologicalReaction direction="left-to-right" evidence="1">
        <dbReference type="Rhea" id="RHEA:72072"/>
    </physiologicalReaction>
</comment>
<comment type="activity regulation">
    <text evidence="1">ADP-ribosyltransferase activity is regulated via an allosteric activation mechanism. In absence of activation signal, PARP1 is autoinhibited by the PARP alpha-helical domain (also named HD region), which prevents effective NAD(+)-binding. Activity is highly stimulated by signals, such as DNA strand breaks. Binding to damaged DNA unfolds the PARP alpha-helical domain, relieving autoinhibition. Poly-ADP-ribosyltransferase activity is tightly regulated and PARP1 is removed from damaged chromatin following initial poly-ADP-ribosylation of chromatin to avoid prolonged residence (trapping) that has cytotoxic consequences. A number of factors (VCP/p97) or post-translational modifications (auto-poly-ADP-ribosylation or ubiquitination) promote PARP1 removal from chromatin.</text>
</comment>
<comment type="subunit">
    <text evidence="1 2 3">Homodimer; PARP-type zinc-fingers from separate PARP1 molecules form a dimer module that specifically recognizes DNA strand breaks (By similarity). Heterodimer; heterodimerizes with PARP2 (By similarity). Interacts (via the PARP catalytic domain) with HPF1 (By similarity). Interacts with NMNAT1 (By similarity). Interacts with nucleosomes; with a preference for nucleosomes containing H2A.X. Interacts with APTX (By similarity). Component of a base excision repair (BER) complex, containing at least XRCC1, PARP1, PARP2, POLB and LRIG3 (By similarity). Interacts with SRY (By similarity). The SWAP complex consists of NPM1, NCL, PARP1 and SWAP70. Interacts with TIAM2 (By similarity). Interacts with PARP3; leading to activate PARP1 in absence of DNA. Interacts (when poly-ADP-ribosylated) with CHD1L (via macro domain). Interacts with the DNA polymerase alpha catalytic subunit POLA1; this interaction functions as part of the control of replication fork progression. Interacts with EEF1A1 and TXK (By similarity). Interacts with RNF4 (By similarity). Interacts with RNF146 (By similarity). Interacts with ZNF423 (By similarity). Interacts with APLF (By similarity). Interacts with SNAI1 (via zinc fingers); the interaction requires SNAI1 to be poly-ADP-ribosylated and non-phosphorylated (active) by GSK3B (By similarity). Interacts (when poly-ADP-ribosylated) with PARP9 (By similarity). Interacts with NR4A3; activates PARP1 by improving acetylation of PARP1 and suppressing the interaction between PARP1 and SIRT1 (By similarity). Interacts (via catalytic domain) with PUM3; the interaction inhibits the poly-ADP-ribosylation activity of PARP1 and the degradation of PARP1 by CASP3 following genotoxic stress. Interacts with ZNF365. Interacts with RRP1B. Interacts with TIMELESS; the interaction is direct. Interacts with CGAS; leading to impede the formation of the PARP1-TIMELESS complex. Interacts with KHDC3L, the interaction is increased following the formation of DNA double-strand breaks (By similarity). Interacts (when auto-poly-ADP-ribosylated) with XRCC1; leading to inhibit PARP1 ADP-ribosyltransferase activity. Interacts with SPINDOC; promoting PARP1 ADP-ribosyltransferase activity. Interacts with BANF1; leading to inhibit PARP1 ADP-ribosyltransferase activity in response to oxidative DNA damage. Interacts (when sumoylated and ubiquitinated) with VCP/p97; leading to its extraction from chromatin. Interacts with YARS1; promoting PARP1 ADP-ribosyltransferase activity. Interacts with PACMP micropeptide; Interacts with PACMP micropeptide; interaction (By similarity). Interacts (when poly-ADP-ribosylated) with isoform 1 of MACROH2A1; MACROH2A1 specifically binds to poly-ADP-ribose chains and inhibits PARP1 activity, limiting the consumption of nuclear NAD(+) (By similarity). Interacts with CARM1; promoting recruitment to replication forks (By similarity). Interacts with RECQL (By similarity). Interacts with ZNF32; the interaction reshapes ZNF432 interacting proteins (By similarity). Interacts with TPRN; TPRN interacts with a number of DNA damage response proteins, is recruited to sites of DNA damage and may play a role in DNA damage repair (By similarity).</text>
</comment>
<comment type="subunit">
    <molecule>Poly [ADP-ribose] polymerase 1, processed C-terminus</molecule>
    <text evidence="1">Interacts (when auto-poly-ADP-ribosylated) with AIFM1.</text>
</comment>
<comment type="subcellular location">
    <subcellularLocation>
        <location evidence="1">Chromosome</location>
    </subcellularLocation>
    <subcellularLocation>
        <location evidence="1">Nucleus</location>
    </subcellularLocation>
    <subcellularLocation>
        <location evidence="1">Nucleus</location>
        <location evidence="1">Nucleolus</location>
    </subcellularLocation>
    <subcellularLocation>
        <location evidence="1">Cytoplasm</location>
        <location evidence="1">Cytosol</location>
    </subcellularLocation>
    <text evidence="1">Localizes to sites of DNA damage. Recognizes (via PARP-type zinc-fingers) and binds DNA strand breaks. Also binds normal/undamaged chromatin. Auto poly-ADP-ribosylation promotes dissociation from chromatin. Extracted from chromatin by VCP/p97 following sumoylation and ubiquitination. Translocates from the nucleus to the cytosol following phosphorylation by PRKDC. Recruited to replication forks following interaction with CARM1.</text>
</comment>
<comment type="subcellular location">
    <molecule>Poly [ADP-ribose] polymerase 1, processed N-terminus</molecule>
    <subcellularLocation>
        <location evidence="1">Chromosome</location>
    </subcellularLocation>
    <text evidence="1">Following cleavage by caspase-3 (CASP3) and caspase-7 (CASP7) in response to apoptosis, this cleavage form irreversibly binds to DNA breaks.</text>
</comment>
<comment type="subcellular location">
    <molecule>Poly [ADP-ribose] polymerase 1, processed C-terminus</molecule>
    <subcellularLocation>
        <location evidence="1">Cytoplasm</location>
    </subcellularLocation>
    <text evidence="1">Following cleavage by caspase-3 (CASP3) and caspase-7 (CASP7) in response to apoptosis, translocates into the cytoplasm, where the auto-poly-ADP-ribosylated form serves as a poly-ADP-ribose carrier to induce AIFM1-mediated apoptosis.</text>
</comment>
<comment type="domain">
    <text evidence="1">The two PARP-type zinc-fingers (also named Zn1 and Zn2) specifically recognize DNA strand breaks: PARP-type zinc-finger 1 binds PARP-type zinc-finger 2 from a separate PARP1 molecule to form a dimeric module that specifically recognizes DNA strand breaks.</text>
</comment>
<comment type="domain">
    <text evidence="1">The PADR1-type (also named Zn3) zinc-finger mediates an interdomain contact and is required for the ability of PARP1 to regulate chromatin structure.</text>
</comment>
<comment type="domain">
    <text evidence="1">The BRCT domain is able to bind intact DNA without activating the poly-ADP-ribosyltransferase activity. The BRCT domain mediates DNA intrastrand transfer (named 'monkey-bar mechanism') that allows rapid movements of PARP1 through the nucleus.</text>
</comment>
<comment type="domain">
    <text evidence="4">The WGR domain bridges two nucleosomes, with the broken DNA aligned in a position suitable for ligation. The bridging induces structural changes in PARP1 that signal the recognition of a DNA break to the catalytic domain of PARP1, promoting HPF1 recruitment and subsequent activation of PARP1, licensing serine ADP-ribosylation of target proteins.</text>
</comment>
<comment type="domain">
    <text evidence="1">The PARP alpha-helical domain (also named HD region) prevents effective NAD(+)-binding in absence of activation signal. Binding to damaged DNA unfolds the PARP alpha-helical domain, relieving autoinhibition.</text>
</comment>
<comment type="PTM">
    <text evidence="1 2">Poly-ADP-ribosylated on serine, glutamate and aspartate residues by autocatalysis. Auto-ADP-ribosylation on serine takes place following interaction with HPF1. Auto poly-ADP-ribosylation on serine residues promotes its dissociation from chromatin. Poly-ADP-ribosylated by PARP2; poly-ADP-ribosylation mediates the recruitment of CHD1L to DNA damage sites (By similarity). Mono-ADP-ribosylated at Lys-523 by SIRT6 in response to oxidative stress, promoting recruitment to double-strand breaks (DSBs) sites (By similarity).</text>
</comment>
<comment type="PTM">
    <text evidence="2">S-nitrosylated, leading to inhibit transcription regulation activity.</text>
</comment>
<comment type="PTM">
    <text evidence="1">Phosphorylated at Thr-596 by PRKDC in response to DNA damage following virus infection, promoting its translocation to the cytosol. Phosphorylated by TXK.</text>
</comment>
<comment type="PTM">
    <text evidence="1">Proteolytically cleaved by caspase-3 (CASP3) and caspase-7 (CASP7) in response to apoptosis to generate the Poly [ADP-ribose] polymerase 1, processed N-terminus and Poly [ADP-ribose] polymerase 1, processed C-terminus forms.</text>
</comment>
<comment type="PTM">
    <text evidence="1">Sumoylated with SUMO1 or SUMO2 by PIAS4 following prolonged residence (trapping) to chromatin. Sumoylation promotes ubiquitination by RNF4 and removal from chromatin by VCP/p97.</text>
</comment>
<comment type="PTM">
    <text evidence="1">Ubiquitinated by RNF4 following sumoylation by PIAS4 in response to prolonged residence (trapping) to chromatin. Ubiquitination promotes removal from chromatin by VCP/p97.</text>
</comment>
<comment type="similarity">
    <text evidence="11 13">Belongs to the ARTD/PARP family.</text>
</comment>
<feature type="initiator methionine" description="Removed" evidence="1">
    <location>
        <position position="1"/>
    </location>
</feature>
<feature type="chain" id="PRO_0000211318" description="Poly [ADP-ribose] polymerase 1">
    <location>
        <begin position="2"/>
        <end position="1016"/>
    </location>
</feature>
<feature type="chain" id="PRO_0000456357" description="Poly [ADP-ribose] polymerase 1, processed N-terminus" evidence="1">
    <location>
        <begin position="2"/>
        <end position="217"/>
    </location>
</feature>
<feature type="chain" id="PRO_0000456358" description="Poly [ADP-ribose] polymerase 1, processed C-terminus" evidence="1">
    <location>
        <begin position="218"/>
        <end position="1016"/>
    </location>
</feature>
<feature type="domain" description="PADR1 zinc-binding" evidence="11">
    <location>
        <begin position="228"/>
        <end position="362"/>
    </location>
</feature>
<feature type="domain" description="BRCT" evidence="6">
    <location>
        <begin position="387"/>
        <end position="478"/>
    </location>
</feature>
<feature type="domain" description="WGR" evidence="10">
    <location>
        <begin position="544"/>
        <end position="640"/>
    </location>
</feature>
<feature type="domain" description="PARP alpha-helical" evidence="9">
    <location>
        <begin position="664"/>
        <end position="781"/>
    </location>
</feature>
<feature type="domain" description="PARP catalytic" evidence="8">
    <location>
        <begin position="790"/>
        <end position="1016"/>
    </location>
</feature>
<feature type="zinc finger region" description="PARP-type 1" evidence="7">
    <location>
        <begin position="9"/>
        <end position="93"/>
    </location>
</feature>
<feature type="zinc finger region" description="PARP-type 2" evidence="7">
    <location>
        <begin position="116"/>
        <end position="206"/>
    </location>
</feature>
<feature type="region of interest" description="Zinc ribbon" evidence="11">
    <location>
        <begin position="293"/>
        <end position="335"/>
    </location>
</feature>
<feature type="region of interest" description="Disordered" evidence="12">
    <location>
        <begin position="360"/>
        <end position="390"/>
    </location>
</feature>
<feature type="region of interest" description="Automodification domain" evidence="1">
    <location>
        <begin position="376"/>
        <end position="526"/>
    </location>
</feature>
<feature type="region of interest" description="Disordered" evidence="12">
    <location>
        <begin position="494"/>
        <end position="523"/>
    </location>
</feature>
<feature type="short sequence motif" description="Nuclear localization signal" evidence="1">
    <location>
        <begin position="210"/>
        <end position="212"/>
    </location>
</feature>
<feature type="short sequence motif" description="Nuclear localization signal" evidence="1">
    <location>
        <begin position="224"/>
        <end position="229"/>
    </location>
</feature>
<feature type="compositionally biased region" description="Low complexity" evidence="12">
    <location>
        <begin position="365"/>
        <end position="386"/>
    </location>
</feature>
<feature type="compositionally biased region" description="Low complexity" evidence="12">
    <location>
        <begin position="496"/>
        <end position="506"/>
    </location>
</feature>
<feature type="compositionally biased region" description="Basic and acidic residues" evidence="12">
    <location>
        <begin position="512"/>
        <end position="523"/>
    </location>
</feature>
<feature type="active site" description="For poly [ADP-ribose] polymerase activity" evidence="1">
    <location>
        <position position="990"/>
    </location>
</feature>
<feature type="binding site" evidence="7">
    <location>
        <position position="21"/>
    </location>
    <ligand>
        <name>Zn(2+)</name>
        <dbReference type="ChEBI" id="CHEBI:29105"/>
        <label>1</label>
    </ligand>
</feature>
<feature type="binding site" evidence="7">
    <location>
        <position position="24"/>
    </location>
    <ligand>
        <name>Zn(2+)</name>
        <dbReference type="ChEBI" id="CHEBI:29105"/>
        <label>1</label>
    </ligand>
</feature>
<feature type="binding site" evidence="7">
    <location>
        <position position="53"/>
    </location>
    <ligand>
        <name>Zn(2+)</name>
        <dbReference type="ChEBI" id="CHEBI:29105"/>
        <label>1</label>
    </ligand>
</feature>
<feature type="binding site" evidence="7">
    <location>
        <position position="56"/>
    </location>
    <ligand>
        <name>Zn(2+)</name>
        <dbReference type="ChEBI" id="CHEBI:29105"/>
        <label>1</label>
    </ligand>
</feature>
<feature type="binding site" evidence="7">
    <location>
        <position position="128"/>
    </location>
    <ligand>
        <name>Zn(2+)</name>
        <dbReference type="ChEBI" id="CHEBI:29105"/>
        <label>2</label>
    </ligand>
</feature>
<feature type="binding site" evidence="7">
    <location>
        <position position="131"/>
    </location>
    <ligand>
        <name>Zn(2+)</name>
        <dbReference type="ChEBI" id="CHEBI:29105"/>
        <label>2</label>
    </ligand>
</feature>
<feature type="binding site" evidence="7">
    <location>
        <position position="162"/>
    </location>
    <ligand>
        <name>Zn(2+)</name>
        <dbReference type="ChEBI" id="CHEBI:29105"/>
        <label>2</label>
    </ligand>
</feature>
<feature type="binding site" evidence="7">
    <location>
        <position position="165"/>
    </location>
    <ligand>
        <name>Zn(2+)</name>
        <dbReference type="ChEBI" id="CHEBI:29105"/>
        <label>2</label>
    </ligand>
</feature>
<feature type="binding site" evidence="11">
    <location>
        <position position="298"/>
    </location>
    <ligand>
        <name>Zn(2+)</name>
        <dbReference type="ChEBI" id="CHEBI:29105"/>
        <label>3</label>
    </ligand>
</feature>
<feature type="binding site" evidence="11">
    <location>
        <position position="301"/>
    </location>
    <ligand>
        <name>Zn(2+)</name>
        <dbReference type="ChEBI" id="CHEBI:29105"/>
        <label>3</label>
    </ligand>
</feature>
<feature type="binding site" evidence="11">
    <location>
        <position position="314"/>
    </location>
    <ligand>
        <name>Zn(2+)</name>
        <dbReference type="ChEBI" id="CHEBI:29105"/>
        <label>3</label>
    </ligand>
</feature>
<feature type="binding site" evidence="11">
    <location>
        <position position="324"/>
    </location>
    <ligand>
        <name>Zn(2+)</name>
        <dbReference type="ChEBI" id="CHEBI:29105"/>
        <label>3</label>
    </ligand>
</feature>
<feature type="binding site" evidence="4">
    <location>
        <begin position="864"/>
        <end position="866"/>
    </location>
    <ligand>
        <name>NAD(+)</name>
        <dbReference type="ChEBI" id="CHEBI:57540"/>
    </ligand>
</feature>
<feature type="binding site" evidence="4">
    <location>
        <position position="873"/>
    </location>
    <ligand>
        <name>NAD(+)</name>
        <dbReference type="ChEBI" id="CHEBI:57540"/>
    </ligand>
</feature>
<feature type="binding site" evidence="4">
    <location>
        <position position="880"/>
    </location>
    <ligand>
        <name>NAD(+)</name>
        <dbReference type="ChEBI" id="CHEBI:57540"/>
    </ligand>
</feature>
<feature type="binding site" evidence="4">
    <location>
        <position position="906"/>
    </location>
    <ligand>
        <name>NAD(+)</name>
        <dbReference type="ChEBI" id="CHEBI:57540"/>
    </ligand>
</feature>
<feature type="site" description="Cleavage; by caspase-3 and caspase-7" evidence="1">
    <location>
        <begin position="217"/>
        <end position="218"/>
    </location>
</feature>
<feature type="modified residue" description="N-acetylalanine" evidence="1">
    <location>
        <position position="2"/>
    </location>
</feature>
<feature type="modified residue" description="Phosphoserine" evidence="1">
    <location>
        <position position="41"/>
    </location>
</feature>
<feature type="modified residue" description="N6-acetyllysine" evidence="1">
    <location>
        <position position="100"/>
    </location>
</feature>
<feature type="modified residue" description="N6-acetyllysine" evidence="1">
    <location>
        <position position="108"/>
    </location>
</feature>
<feature type="modified residue" description="N6-acetyllysine" evidence="1">
    <location>
        <position position="134"/>
    </location>
</feature>
<feature type="modified residue" description="Phosphoserine" evidence="1">
    <location>
        <position position="180"/>
    </location>
</feature>
<feature type="modified residue" description="Phosphoserine" evidence="1">
    <location>
        <position position="188"/>
    </location>
</feature>
<feature type="modified residue" description="Phosphoserine" evidence="1">
    <location>
        <position position="277"/>
    </location>
</feature>
<feature type="modified residue" description="Phosphoserine" evidence="1">
    <location>
        <position position="280"/>
    </location>
</feature>
<feature type="modified residue" description="PolyADP-ribosyl aspartic acid" evidence="1">
    <location>
        <position position="389"/>
    </location>
</feature>
<feature type="modified residue" description="PolyADP-ribosyl glutamic acid" evidence="5">
    <location>
        <position position="409"/>
    </location>
</feature>
<feature type="modified residue" description="PolyADP-ribosyl glutamic acid" evidence="5">
    <location>
        <position position="415"/>
    </location>
</feature>
<feature type="modified residue" description="PolyADP-ribosyl glutamic acid" evidence="5">
    <location>
        <position position="437"/>
    </location>
</feature>
<feature type="modified residue" description="PolyADP-ribosyl glutamic acid" evidence="5">
    <location>
        <position position="446"/>
    </location>
</feature>
<feature type="modified residue" description="PolyADP-ribosyl glutamic acid" evidence="5">
    <location>
        <position position="447"/>
    </location>
</feature>
<feature type="modified residue" description="PolyADP-ribosyl glutamic acid" evidence="5">
    <location>
        <position position="450"/>
    </location>
</feature>
<feature type="modified residue" description="PolyADP-ribosyl glutamic acid" evidence="5">
    <location>
        <position position="458"/>
    </location>
</feature>
<feature type="modified residue" description="PolyADP-ribosyl glutamic acid" evidence="5">
    <location>
        <position position="473"/>
    </location>
</feature>
<feature type="modified residue" description="PolyADP-ribosyl glutamic acid" evidence="5">
    <location>
        <position position="486"/>
    </location>
</feature>
<feature type="modified residue" description="PolyADP-ribosyl glutamic acid" evidence="1">
    <location>
        <position position="490"/>
    </location>
</feature>
<feature type="modified residue" description="PolyADP-ribosyl glutamic acid" evidence="1">
    <location>
        <position position="493"/>
    </location>
</feature>
<feature type="modified residue" description="ADP-ribosylserine" evidence="1">
    <location>
        <position position="501"/>
    </location>
</feature>
<feature type="modified residue" description="ADP-ribosylserine" evidence="1">
    <location>
        <position position="506"/>
    </location>
</feature>
<feature type="modified residue" description="ADP-ribosylserine" evidence="1">
    <location>
        <position position="509"/>
    </location>
</feature>
<feature type="modified residue" description="PolyADP-ribosyl glutamic acid" evidence="5">
    <location>
        <position position="515"/>
    </location>
</feature>
<feature type="modified residue" description="PolyADP-ribosyl glutamic acid" evidence="5">
    <location>
        <position position="516"/>
    </location>
</feature>
<feature type="modified residue" description="ADP-ribosylserine" evidence="1">
    <location>
        <position position="521"/>
    </location>
</feature>
<feature type="modified residue" description="PolyADP-ribosyl glutamic acid" evidence="5">
    <location>
        <position position="522"/>
    </location>
</feature>
<feature type="modified residue" description="N6-(ADP-ribosyl)lysine" evidence="1">
    <location>
        <position position="523"/>
    </location>
</feature>
<feature type="modified residue" description="Phosphothreonine" evidence="1">
    <location>
        <position position="596"/>
    </location>
</feature>
<feature type="modified residue" description="N6-acetyllysine" evidence="1">
    <location>
        <position position="602"/>
    </location>
</feature>
<feature type="modified residue" description="N6-acetyllysine" evidence="1">
    <location>
        <position position="623"/>
    </location>
</feature>
<feature type="modified residue" description="Phosphoserine" evidence="1">
    <location>
        <position position="784"/>
    </location>
</feature>
<feature type="modified residue" description="Phosphoserine" evidence="1">
    <location>
        <position position="788"/>
    </location>
</feature>
<feature type="cross-link" description="Glycyl lysine isopeptide (Lys-Gly) (interchain with G-Cter in SUMO1); alternate" evidence="1">
    <location>
        <position position="206"/>
    </location>
</feature>
<feature type="cross-link" description="Glycyl lysine isopeptide (Lys-Gly) (interchain with G-Cter in SUMO2); alternate" evidence="1">
    <location>
        <position position="206"/>
    </location>
</feature>
<feature type="cross-link" description="Glycyl lysine isopeptide (Lys-Gly) (interchain with G-Cter in SUMO2)" evidence="1">
    <location>
        <position position="252"/>
    </location>
</feature>
<feature type="cross-link" description="Glycyl lysine isopeptide (Lys-Gly) (interchain with G-Cter in SUMO2)" evidence="1">
    <location>
        <position position="469"/>
    </location>
</feature>
<feature type="cross-link" description="Glycyl lysine isopeptide (Lys-Gly) (interchain with G-Cter in SUMO1); alternate" evidence="1">
    <location>
        <position position="488"/>
    </location>
</feature>
<feature type="cross-link" description="Glycyl lysine isopeptide (Lys-Gly) (interchain with G-Cter in SUMO2); alternate" evidence="1">
    <location>
        <position position="488"/>
    </location>
</feature>
<feature type="cross-link" description="Glycyl lysine isopeptide (Lys-Gly) (interchain with G-Cter in SUMO2)" evidence="1">
    <location>
        <position position="514"/>
    </location>
</feature>
<feature type="cross-link" description="Glycyl lysine isopeptide (Lys-Gly) (interchain with G-Cter in SUMO2)" evidence="1">
    <location>
        <position position="530"/>
    </location>
</feature>
<feature type="cross-link" description="Glycyl lysine isopeptide (Lys-Gly) (interchain with G-Cter in SUMO1); alternate" evidence="1">
    <location>
        <position position="750"/>
    </location>
</feature>
<feature type="cross-link" description="Glycyl lysine isopeptide (Lys-Gly) (interchain with G-Cter in SUMO2); alternate" evidence="1">
    <location>
        <position position="750"/>
    </location>
</feature>
<name>PARP1_BOVIN</name>